<dbReference type="EMBL" id="AK095136">
    <property type="protein sequence ID" value="BAC04491.1"/>
    <property type="molecule type" value="mRNA"/>
</dbReference>
<dbReference type="EMBL" id="BC022548">
    <property type="protein sequence ID" value="AAH22548.2"/>
    <property type="molecule type" value="mRNA"/>
</dbReference>
<dbReference type="CCDS" id="CCDS60517.1">
    <molecule id="Q8N9B8-2"/>
</dbReference>
<dbReference type="CCDS" id="CCDS7202.2">
    <molecule id="Q8N9B8-1"/>
</dbReference>
<dbReference type="RefSeq" id="NP_001269791.1">
    <molecule id="Q8N9B8-2"/>
    <property type="nucleotide sequence ID" value="NM_001282862.2"/>
</dbReference>
<dbReference type="RefSeq" id="NP_660356.2">
    <molecule id="Q8N9B8-1"/>
    <property type="nucleotide sequence ID" value="NM_145313.4"/>
</dbReference>
<dbReference type="SMR" id="Q8N9B8"/>
<dbReference type="BioGRID" id="128673">
    <property type="interactions" value="9"/>
</dbReference>
<dbReference type="FunCoup" id="Q8N9B8">
    <property type="interactions" value="699"/>
</dbReference>
<dbReference type="IntAct" id="Q8N9B8">
    <property type="interactions" value="5"/>
</dbReference>
<dbReference type="STRING" id="9606.ENSP00000363583"/>
<dbReference type="iPTMnet" id="Q8N9B8"/>
<dbReference type="PhosphoSitePlus" id="Q8N9B8"/>
<dbReference type="BioMuta" id="RASGEF1A"/>
<dbReference type="DMDM" id="156633608"/>
<dbReference type="MassIVE" id="Q8N9B8"/>
<dbReference type="PaxDb" id="9606-ENSP00000363583"/>
<dbReference type="PeptideAtlas" id="Q8N9B8"/>
<dbReference type="ProteomicsDB" id="72520">
    <molecule id="Q8N9B8-1"/>
</dbReference>
<dbReference type="ProteomicsDB" id="72521">
    <molecule id="Q8N9B8-2"/>
</dbReference>
<dbReference type="Antibodypedia" id="26875">
    <property type="antibodies" value="78 antibodies from 24 providers"/>
</dbReference>
<dbReference type="DNASU" id="221002"/>
<dbReference type="Ensembl" id="ENST00000374459.5">
    <molecule id="Q8N9B8-2"/>
    <property type="protein sequence ID" value="ENSP00000363583.1"/>
    <property type="gene ID" value="ENSG00000198915.12"/>
</dbReference>
<dbReference type="Ensembl" id="ENST00000395809.5">
    <molecule id="Q8N9B8-1"/>
    <property type="protein sequence ID" value="ENSP00000379154.1"/>
    <property type="gene ID" value="ENSG00000198915.12"/>
</dbReference>
<dbReference type="Ensembl" id="ENST00000395810.6">
    <molecule id="Q8N9B8-1"/>
    <property type="protein sequence ID" value="ENSP00000379155.1"/>
    <property type="gene ID" value="ENSG00000198915.12"/>
</dbReference>
<dbReference type="GeneID" id="221002"/>
<dbReference type="KEGG" id="hsa:221002"/>
<dbReference type="MANE-Select" id="ENST00000395810.6">
    <property type="protein sequence ID" value="ENSP00000379155.1"/>
    <property type="RefSeq nucleotide sequence ID" value="NM_145313.4"/>
    <property type="RefSeq protein sequence ID" value="NP_660356.2"/>
</dbReference>
<dbReference type="UCSC" id="uc001jao.3">
    <molecule id="Q8N9B8-1"/>
    <property type="organism name" value="human"/>
</dbReference>
<dbReference type="AGR" id="HGNC:24246"/>
<dbReference type="CTD" id="221002"/>
<dbReference type="DisGeNET" id="221002"/>
<dbReference type="GeneCards" id="RASGEF1A"/>
<dbReference type="HGNC" id="HGNC:24246">
    <property type="gene designation" value="RASGEF1A"/>
</dbReference>
<dbReference type="HPA" id="ENSG00000198915">
    <property type="expression patterns" value="Tissue enhanced (bone marrow, brain)"/>
</dbReference>
<dbReference type="MalaCards" id="RASGEF1A"/>
<dbReference type="MIM" id="614531">
    <property type="type" value="gene"/>
</dbReference>
<dbReference type="neXtProt" id="NX_Q8N9B8"/>
<dbReference type="OpenTargets" id="ENSG00000198915"/>
<dbReference type="PharmGKB" id="PA134884893"/>
<dbReference type="VEuPathDB" id="HostDB:ENSG00000198915"/>
<dbReference type="eggNOG" id="KOG3541">
    <property type="taxonomic scope" value="Eukaryota"/>
</dbReference>
<dbReference type="GeneTree" id="ENSGT00940000160822"/>
<dbReference type="HOGENOM" id="CLU_022907_2_0_1"/>
<dbReference type="InParanoid" id="Q8N9B8"/>
<dbReference type="OrthoDB" id="20825at2759"/>
<dbReference type="PAN-GO" id="Q8N9B8">
    <property type="GO annotations" value="4 GO annotations based on evolutionary models"/>
</dbReference>
<dbReference type="PhylomeDB" id="Q8N9B8"/>
<dbReference type="TreeFam" id="TF313379"/>
<dbReference type="PathwayCommons" id="Q8N9B8"/>
<dbReference type="Reactome" id="R-HSA-5673001">
    <property type="pathway name" value="RAF/MAP kinase cascade"/>
</dbReference>
<dbReference type="SignaLink" id="Q8N9B8"/>
<dbReference type="SIGNOR" id="Q8N9B8"/>
<dbReference type="BioGRID-ORCS" id="221002">
    <property type="hits" value="12 hits in 1152 CRISPR screens"/>
</dbReference>
<dbReference type="GenomeRNAi" id="221002"/>
<dbReference type="Pharos" id="Q8N9B8">
    <property type="development level" value="Tdark"/>
</dbReference>
<dbReference type="PRO" id="PR:Q8N9B8"/>
<dbReference type="Proteomes" id="UP000005640">
    <property type="component" value="Chromosome 10"/>
</dbReference>
<dbReference type="RNAct" id="Q8N9B8">
    <property type="molecule type" value="protein"/>
</dbReference>
<dbReference type="Bgee" id="ENSG00000198915">
    <property type="expression patterns" value="Expressed in endothelial cell and 155 other cell types or tissues"/>
</dbReference>
<dbReference type="ExpressionAtlas" id="Q8N9B8">
    <property type="expression patterns" value="baseline and differential"/>
</dbReference>
<dbReference type="GO" id="GO:0005829">
    <property type="term" value="C:cytosol"/>
    <property type="evidence" value="ECO:0000304"/>
    <property type="project" value="Reactome"/>
</dbReference>
<dbReference type="GO" id="GO:0005886">
    <property type="term" value="C:plasma membrane"/>
    <property type="evidence" value="ECO:0000318"/>
    <property type="project" value="GO_Central"/>
</dbReference>
<dbReference type="GO" id="GO:0005085">
    <property type="term" value="F:guanyl-nucleotide exchange factor activity"/>
    <property type="evidence" value="ECO:0000314"/>
    <property type="project" value="UniProtKB"/>
</dbReference>
<dbReference type="GO" id="GO:0016477">
    <property type="term" value="P:cell migration"/>
    <property type="evidence" value="ECO:0000314"/>
    <property type="project" value="UniProtKB"/>
</dbReference>
<dbReference type="GO" id="GO:0046579">
    <property type="term" value="P:positive regulation of Ras protein signal transduction"/>
    <property type="evidence" value="ECO:0000314"/>
    <property type="project" value="FlyBase"/>
</dbReference>
<dbReference type="GO" id="GO:0007265">
    <property type="term" value="P:Ras protein signal transduction"/>
    <property type="evidence" value="ECO:0000318"/>
    <property type="project" value="GO_Central"/>
</dbReference>
<dbReference type="CDD" id="cd00155">
    <property type="entry name" value="RasGEF"/>
    <property type="match status" value="1"/>
</dbReference>
<dbReference type="CDD" id="cd06224">
    <property type="entry name" value="REM"/>
    <property type="match status" value="1"/>
</dbReference>
<dbReference type="FunFam" id="1.10.840.10:FF:000008">
    <property type="entry name" value="Ras-GEF domain-containing family member 1B"/>
    <property type="match status" value="1"/>
</dbReference>
<dbReference type="FunFam" id="1.20.870.10:FF:000007">
    <property type="entry name" value="Ras-GEF domain-containing family member 1B"/>
    <property type="match status" value="1"/>
</dbReference>
<dbReference type="Gene3D" id="1.10.840.10">
    <property type="entry name" value="Ras guanine-nucleotide exchange factors catalytic domain"/>
    <property type="match status" value="1"/>
</dbReference>
<dbReference type="Gene3D" id="1.20.870.10">
    <property type="entry name" value="Son of sevenless (SoS) protein Chain: S domain 1"/>
    <property type="match status" value="1"/>
</dbReference>
<dbReference type="InterPro" id="IPR008937">
    <property type="entry name" value="Ras-like_GEF"/>
</dbReference>
<dbReference type="InterPro" id="IPR000651">
    <property type="entry name" value="Ras-like_Gua-exchang_fac_N"/>
</dbReference>
<dbReference type="InterPro" id="IPR023578">
    <property type="entry name" value="Ras_GEF_dom_sf"/>
</dbReference>
<dbReference type="InterPro" id="IPR001895">
    <property type="entry name" value="RASGEF_cat_dom"/>
</dbReference>
<dbReference type="InterPro" id="IPR036964">
    <property type="entry name" value="RASGEF_cat_dom_sf"/>
</dbReference>
<dbReference type="PANTHER" id="PTHR23113">
    <property type="entry name" value="GUANINE NUCLEOTIDE EXCHANGE FACTOR"/>
    <property type="match status" value="1"/>
</dbReference>
<dbReference type="PANTHER" id="PTHR23113:SF172">
    <property type="entry name" value="RAS-GEF DOMAIN-CONTAINING FAMILY MEMBER 1A"/>
    <property type="match status" value="1"/>
</dbReference>
<dbReference type="Pfam" id="PF00617">
    <property type="entry name" value="RasGEF"/>
    <property type="match status" value="1"/>
</dbReference>
<dbReference type="Pfam" id="PF00618">
    <property type="entry name" value="RasGEF_N"/>
    <property type="match status" value="1"/>
</dbReference>
<dbReference type="SMART" id="SM00147">
    <property type="entry name" value="RasGEF"/>
    <property type="match status" value="1"/>
</dbReference>
<dbReference type="SMART" id="SM00229">
    <property type="entry name" value="RasGEFN"/>
    <property type="match status" value="1"/>
</dbReference>
<dbReference type="SUPFAM" id="SSF48366">
    <property type="entry name" value="Ras GEF"/>
    <property type="match status" value="1"/>
</dbReference>
<dbReference type="PROSITE" id="PS50009">
    <property type="entry name" value="RASGEF_CAT"/>
    <property type="match status" value="1"/>
</dbReference>
<dbReference type="PROSITE" id="PS50212">
    <property type="entry name" value="RASGEF_NTER"/>
    <property type="match status" value="1"/>
</dbReference>
<feature type="chain" id="PRO_0000297635" description="Ras-GEF domain-containing family member 1A">
    <location>
        <begin position="1"/>
        <end position="481"/>
    </location>
</feature>
<feature type="domain" description="N-terminal Ras-GEF" evidence="1">
    <location>
        <begin position="41"/>
        <end position="170"/>
    </location>
</feature>
<feature type="domain" description="Ras-GEF" evidence="2">
    <location>
        <begin position="214"/>
        <end position="461"/>
    </location>
</feature>
<feature type="splice variant" id="VSP_027312" description="In isoform 2." evidence="5">
    <original>M</original>
    <variation>MFLEPQETM</variation>
    <location>
        <position position="1"/>
    </location>
</feature>
<feature type="sequence conflict" description="In Ref. 2; AAH22548." evidence="6" ref="2">
    <original>M</original>
    <variation>V</variation>
    <location>
        <position position="465"/>
    </location>
</feature>
<comment type="function">
    <text evidence="3 4">Guanine nucleotide exchange factor (GEF) with specificity for RAP2A, KRAS, HRAS, and NRAS (in vitro). Plays a role in cell migration.</text>
</comment>
<comment type="alternative products">
    <event type="alternative splicing"/>
    <isoform>
        <id>Q8N9B8-1</id>
        <name>1</name>
        <sequence type="displayed"/>
    </isoform>
    <isoform>
        <id>Q8N9B8-2</id>
        <name>2</name>
        <sequence type="described" ref="VSP_027312"/>
    </isoform>
</comment>
<comment type="tissue specificity">
    <text evidence="3">Detected in brain and spinal cord. Highly expressed in a number of intrahepatic cholangiocarcinoma tissue biopsies.</text>
</comment>
<organism>
    <name type="scientific">Homo sapiens</name>
    <name type="common">Human</name>
    <dbReference type="NCBI Taxonomy" id="9606"/>
    <lineage>
        <taxon>Eukaryota</taxon>
        <taxon>Metazoa</taxon>
        <taxon>Chordata</taxon>
        <taxon>Craniata</taxon>
        <taxon>Vertebrata</taxon>
        <taxon>Euteleostomi</taxon>
        <taxon>Mammalia</taxon>
        <taxon>Eutheria</taxon>
        <taxon>Euarchontoglires</taxon>
        <taxon>Primates</taxon>
        <taxon>Haplorrhini</taxon>
        <taxon>Catarrhini</taxon>
        <taxon>Hominidae</taxon>
        <taxon>Homo</taxon>
    </lineage>
</organism>
<gene>
    <name type="primary">RASGEF1A</name>
</gene>
<proteinExistence type="evidence at protein level"/>
<keyword id="KW-0025">Alternative splicing</keyword>
<keyword id="KW-0344">Guanine-nucleotide releasing factor</keyword>
<keyword id="KW-1267">Proteomics identification</keyword>
<keyword id="KW-1185">Reference proteome</keyword>
<protein>
    <recommendedName>
        <fullName>Ras-GEF domain-containing family member 1A</fullName>
    </recommendedName>
</protein>
<reference key="1">
    <citation type="journal article" date="2004" name="Nat. Genet.">
        <title>Complete sequencing and characterization of 21,243 full-length human cDNAs.</title>
        <authorList>
            <person name="Ota T."/>
            <person name="Suzuki Y."/>
            <person name="Nishikawa T."/>
            <person name="Otsuki T."/>
            <person name="Sugiyama T."/>
            <person name="Irie R."/>
            <person name="Wakamatsu A."/>
            <person name="Hayashi K."/>
            <person name="Sato H."/>
            <person name="Nagai K."/>
            <person name="Kimura K."/>
            <person name="Makita H."/>
            <person name="Sekine M."/>
            <person name="Obayashi M."/>
            <person name="Nishi T."/>
            <person name="Shibahara T."/>
            <person name="Tanaka T."/>
            <person name="Ishii S."/>
            <person name="Yamamoto J."/>
            <person name="Saito K."/>
            <person name="Kawai Y."/>
            <person name="Isono Y."/>
            <person name="Nakamura Y."/>
            <person name="Nagahari K."/>
            <person name="Murakami K."/>
            <person name="Yasuda T."/>
            <person name="Iwayanagi T."/>
            <person name="Wagatsuma M."/>
            <person name="Shiratori A."/>
            <person name="Sudo H."/>
            <person name="Hosoiri T."/>
            <person name="Kaku Y."/>
            <person name="Kodaira H."/>
            <person name="Kondo H."/>
            <person name="Sugawara M."/>
            <person name="Takahashi M."/>
            <person name="Kanda K."/>
            <person name="Yokoi T."/>
            <person name="Furuya T."/>
            <person name="Kikkawa E."/>
            <person name="Omura Y."/>
            <person name="Abe K."/>
            <person name="Kamihara K."/>
            <person name="Katsuta N."/>
            <person name="Sato K."/>
            <person name="Tanikawa M."/>
            <person name="Yamazaki M."/>
            <person name="Ninomiya K."/>
            <person name="Ishibashi T."/>
            <person name="Yamashita H."/>
            <person name="Murakawa K."/>
            <person name="Fujimori K."/>
            <person name="Tanai H."/>
            <person name="Kimata M."/>
            <person name="Watanabe M."/>
            <person name="Hiraoka S."/>
            <person name="Chiba Y."/>
            <person name="Ishida S."/>
            <person name="Ono Y."/>
            <person name="Takiguchi S."/>
            <person name="Watanabe S."/>
            <person name="Yosida M."/>
            <person name="Hotuta T."/>
            <person name="Kusano J."/>
            <person name="Kanehori K."/>
            <person name="Takahashi-Fujii A."/>
            <person name="Hara H."/>
            <person name="Tanase T.-O."/>
            <person name="Nomura Y."/>
            <person name="Togiya S."/>
            <person name="Komai F."/>
            <person name="Hara R."/>
            <person name="Takeuchi K."/>
            <person name="Arita M."/>
            <person name="Imose N."/>
            <person name="Musashino K."/>
            <person name="Yuuki H."/>
            <person name="Oshima A."/>
            <person name="Sasaki N."/>
            <person name="Aotsuka S."/>
            <person name="Yoshikawa Y."/>
            <person name="Matsunawa H."/>
            <person name="Ichihara T."/>
            <person name="Shiohata N."/>
            <person name="Sano S."/>
            <person name="Moriya S."/>
            <person name="Momiyama H."/>
            <person name="Satoh N."/>
            <person name="Takami S."/>
            <person name="Terashima Y."/>
            <person name="Suzuki O."/>
            <person name="Nakagawa S."/>
            <person name="Senoh A."/>
            <person name="Mizoguchi H."/>
            <person name="Goto Y."/>
            <person name="Shimizu F."/>
            <person name="Wakebe H."/>
            <person name="Hishigaki H."/>
            <person name="Watanabe T."/>
            <person name="Sugiyama A."/>
            <person name="Takemoto M."/>
            <person name="Kawakami B."/>
            <person name="Yamazaki M."/>
            <person name="Watanabe K."/>
            <person name="Kumagai A."/>
            <person name="Itakura S."/>
            <person name="Fukuzumi Y."/>
            <person name="Fujimori Y."/>
            <person name="Komiyama M."/>
            <person name="Tashiro H."/>
            <person name="Tanigami A."/>
            <person name="Fujiwara T."/>
            <person name="Ono T."/>
            <person name="Yamada K."/>
            <person name="Fujii Y."/>
            <person name="Ozaki K."/>
            <person name="Hirao M."/>
            <person name="Ohmori Y."/>
            <person name="Kawabata A."/>
            <person name="Hikiji T."/>
            <person name="Kobatake N."/>
            <person name="Inagaki H."/>
            <person name="Ikema Y."/>
            <person name="Okamoto S."/>
            <person name="Okitani R."/>
            <person name="Kawakami T."/>
            <person name="Noguchi S."/>
            <person name="Itoh T."/>
            <person name="Shigeta K."/>
            <person name="Senba T."/>
            <person name="Matsumura K."/>
            <person name="Nakajima Y."/>
            <person name="Mizuno T."/>
            <person name="Morinaga M."/>
            <person name="Sasaki M."/>
            <person name="Togashi T."/>
            <person name="Oyama M."/>
            <person name="Hata H."/>
            <person name="Watanabe M."/>
            <person name="Komatsu T."/>
            <person name="Mizushima-Sugano J."/>
            <person name="Satoh T."/>
            <person name="Shirai Y."/>
            <person name="Takahashi Y."/>
            <person name="Nakagawa K."/>
            <person name="Okumura K."/>
            <person name="Nagase T."/>
            <person name="Nomura N."/>
            <person name="Kikuchi H."/>
            <person name="Masuho Y."/>
            <person name="Yamashita R."/>
            <person name="Nakai K."/>
            <person name="Yada T."/>
            <person name="Nakamura Y."/>
            <person name="Ohara O."/>
            <person name="Isogai T."/>
            <person name="Sugano S."/>
        </authorList>
    </citation>
    <scope>NUCLEOTIDE SEQUENCE [LARGE SCALE MRNA] (ISOFORM 2)</scope>
    <source>
        <tissue>Substantia nigra</tissue>
    </source>
</reference>
<reference key="2">
    <citation type="journal article" date="2004" name="Genome Res.">
        <title>The status, quality, and expansion of the NIH full-length cDNA project: the Mammalian Gene Collection (MGC).</title>
        <authorList>
            <consortium name="The MGC Project Team"/>
        </authorList>
    </citation>
    <scope>NUCLEOTIDE SEQUENCE [LARGE SCALE MRNA] (ISOFORM 1)</scope>
    <source>
        <tissue>Brain</tissue>
    </source>
</reference>
<reference key="3">
    <citation type="journal article" date="2006" name="Clin. Cancer Res.">
        <title>Enhanced RASGEF1A expression is involved in the growth and migration of intrahepatic cholangiocarcinoma.</title>
        <authorList>
            <person name="Ura K."/>
            <person name="Obama K."/>
            <person name="Satoh S."/>
            <person name="Sakai Y."/>
            <person name="Nakamura Y."/>
            <person name="Furukawa Y."/>
        </authorList>
    </citation>
    <scope>FUNCTION</scope>
    <scope>TISSUE SPECIFICITY</scope>
</reference>
<reference key="4">
    <citation type="journal article" date="2009" name="FEBS J.">
        <title>RasGEF1A and RasGEF1B are guanine nucleotide exchange factors that discriminate between Rap GTP-binding proteins and mediate Rap2-specific nucleotide exchange.</title>
        <authorList>
            <person name="Yaman E."/>
            <person name="Gasper R."/>
            <person name="Koerner C."/>
            <person name="Wittinghofer A."/>
            <person name="Tazebay U.H."/>
        </authorList>
    </citation>
    <scope>FUNCTION</scope>
</reference>
<accession>Q8N9B8</accession>
<accession>Q8TBF1</accession>
<evidence type="ECO:0000255" key="1">
    <source>
        <dbReference type="PROSITE-ProRule" id="PRU00135"/>
    </source>
</evidence>
<evidence type="ECO:0000255" key="2">
    <source>
        <dbReference type="PROSITE-ProRule" id="PRU00168"/>
    </source>
</evidence>
<evidence type="ECO:0000269" key="3">
    <source>
    </source>
</evidence>
<evidence type="ECO:0000269" key="4">
    <source>
    </source>
</evidence>
<evidence type="ECO:0000303" key="5">
    <source>
    </source>
</evidence>
<evidence type="ECO:0000305" key="6"/>
<sequence>MPQTSVVFSSILGPSCSGQVQPGMGERGGGAGGGSGDLIFQDGHLISGSLEALMEHLVPTVDYYPDRTYIFTFLLSSRVFMPPHDLLARVGQICVEQKQQLEAGPEKAKLKSFSAKIVQLLKEWTEAFPYDFQDEKAMAELKAITHRVTQCDEENGTVKKAIAQMTQSLLLSLAARSQLQELREKLRPPAVDKGPILKTKPPAAQKDILGVCCDPLVLAQQLTHIELDRVSSIYPEDLMQIVSHMDSLDNHRCRGDLTKTYSLEAYDNWFNCLSMLVATEVCRVVKKKHRTRMLEFFIDVARECFNIGNFNSMMAIISGMNLSPVARLKKTWSKVKTAKFDVLEHHMDPSSNFCNYRTALQGATQRSQMANSSREKIVIPVFNLFVKDIYFLHKIHTNHLPNGHINFKKFWEISRQIHEFMTWTQVECPFEKDKKIQSYLLTAPIYSEEALFVASFESEGPENHMEKDSWKTLRTTLLNRA</sequence>
<name>RGF1A_HUMAN</name>